<keyword id="KW-0067">ATP-binding</keyword>
<keyword id="KW-0170">Cobalt</keyword>
<keyword id="KW-0963">Cytoplasm</keyword>
<keyword id="KW-0460">Magnesium</keyword>
<keyword id="KW-0479">Metal-binding</keyword>
<keyword id="KW-0547">Nucleotide-binding</keyword>
<keyword id="KW-0554">One-carbon metabolism</keyword>
<keyword id="KW-0630">Potassium</keyword>
<keyword id="KW-0808">Transferase</keyword>
<evidence type="ECO:0000250" key="1"/>
<evidence type="ECO:0000250" key="2">
    <source>
        <dbReference type="UniProtKB" id="P0A817"/>
    </source>
</evidence>
<evidence type="ECO:0000250" key="3">
    <source>
        <dbReference type="UniProtKB" id="P13444"/>
    </source>
</evidence>
<evidence type="ECO:0000250" key="4">
    <source>
        <dbReference type="UniProtKB" id="Q96551"/>
    </source>
</evidence>
<evidence type="ECO:0000305" key="5"/>
<reference key="1">
    <citation type="journal article" date="1992" name="Proc. Natl. Acad. Sci. U.S.A.">
        <title>Induction by fungal elicitor of S-adenosyl-L-methionine synthetase and S-adenosyl-L-homocysteine hydrolase mRNAs in cultured cells and leaves of Petroselinum crispum.</title>
        <authorList>
            <person name="Kawalleck P."/>
            <person name="Plesch G."/>
            <person name="Hahlbrock K."/>
            <person name="Somssich I.E."/>
        </authorList>
    </citation>
    <scope>NUCLEOTIDE SEQUENCE [MRNA]</scope>
    <source>
        <tissue>Leaf</tissue>
    </source>
</reference>
<protein>
    <recommendedName>
        <fullName>S-adenosylmethionine synthase 2</fullName>
        <shortName>AdoMet synthase 2</shortName>
        <ecNumber evidence="4">2.5.1.6</ecNumber>
    </recommendedName>
    <alternativeName>
        <fullName>Methionine adenosyltransferase 2</fullName>
        <shortName>MAT 2</shortName>
    </alternativeName>
</protein>
<name>METK2_PETCR</name>
<comment type="function">
    <text evidence="4">Catalyzes the formation of S-adenosylmethionine from methionine and ATP. The reaction comprises two steps that are both catalyzed by the same enzyme: formation of S-adenosylmethionine (AdoMet) and triphosphate, and subsequent hydrolysis of the triphosphate.</text>
</comment>
<comment type="catalytic activity">
    <reaction evidence="4">
        <text>L-methionine + ATP + H2O = S-adenosyl-L-methionine + phosphate + diphosphate</text>
        <dbReference type="Rhea" id="RHEA:21080"/>
        <dbReference type="ChEBI" id="CHEBI:15377"/>
        <dbReference type="ChEBI" id="CHEBI:30616"/>
        <dbReference type="ChEBI" id="CHEBI:33019"/>
        <dbReference type="ChEBI" id="CHEBI:43474"/>
        <dbReference type="ChEBI" id="CHEBI:57844"/>
        <dbReference type="ChEBI" id="CHEBI:59789"/>
        <dbReference type="EC" id="2.5.1.6"/>
    </reaction>
</comment>
<comment type="cofactor">
    <cofactor evidence="4">
        <name>Mn(2+)</name>
        <dbReference type="ChEBI" id="CHEBI:29035"/>
    </cofactor>
    <cofactor evidence="4">
        <name>Mg(2+)</name>
        <dbReference type="ChEBI" id="CHEBI:18420"/>
    </cofactor>
    <cofactor evidence="4">
        <name>Co(2+)</name>
        <dbReference type="ChEBI" id="CHEBI:48828"/>
    </cofactor>
    <text evidence="3 4">Binds 2 divalent ions per subunit. The metal ions interact primarily with the substrate (By similarity). Can utilize magnesium, manganese or cobalt (in vitro) (By similarity).</text>
</comment>
<comment type="cofactor">
    <cofactor evidence="4">
        <name>K(+)</name>
        <dbReference type="ChEBI" id="CHEBI:29103"/>
    </cofactor>
    <text evidence="3">Binds 1 potassium ion per subunit. The potassium ion interacts primarily with the substrate (By similarity).</text>
</comment>
<comment type="pathway">
    <text evidence="4">Amino-acid biosynthesis; S-adenosyl-L-methionine biosynthesis; S-adenosyl-L-methionine from L-methionine: step 1/1.</text>
</comment>
<comment type="subunit">
    <text evidence="1">Homotetramer.</text>
</comment>
<comment type="subcellular location">
    <subcellularLocation>
        <location evidence="1">Cytoplasm</location>
    </subcellularLocation>
</comment>
<comment type="tissue specificity">
    <text>Mainly in floral buds and roots.</text>
</comment>
<comment type="induction">
    <text>By fungal elicitor.</text>
</comment>
<comment type="similarity">
    <text evidence="5">Belongs to the AdoMet synthase family.</text>
</comment>
<proteinExistence type="evidence at transcript level"/>
<sequence length="145" mass="15758">AGLTGRKIIIDTYGGWGAHGGGAFSGKDPTKVDRSGAYIVRQAAKSIVASGLARRCIVQVSYAIGVPEPLSVFVDSYGTGKIPDREILQIVKETFDFRPGMISINLDLKRGGNGRFLKTAAYGHFGREDPDFTWEVVKPLKWEKA</sequence>
<feature type="chain" id="PRO_0000174475" description="S-adenosylmethionine synthase 2">
    <location>
        <begin position="1" status="less than"/>
        <end position="145"/>
    </location>
</feature>
<feature type="binding site" description="in other chain" evidence="2">
    <location>
        <begin position="6"/>
        <end position="7"/>
    </location>
    <ligand>
        <name>ATP</name>
        <dbReference type="ChEBI" id="CHEBI:30616"/>
        <note>ligand shared between two neighboring subunits</note>
    </ligand>
</feature>
<feature type="binding site" evidence="2">
    <location>
        <position position="23"/>
    </location>
    <ligand>
        <name>ATP</name>
        <dbReference type="ChEBI" id="CHEBI:30616"/>
        <note>ligand shared between two neighboring subunits</note>
    </ligand>
</feature>
<feature type="binding site" evidence="2">
    <location>
        <position position="27"/>
    </location>
    <ligand>
        <name>ATP</name>
        <dbReference type="ChEBI" id="CHEBI:30616"/>
        <note>ligand shared between two neighboring subunits</note>
    </ligand>
</feature>
<feature type="binding site" evidence="3">
    <location>
        <position position="31"/>
    </location>
    <ligand>
        <name>ATP</name>
        <dbReference type="ChEBI" id="CHEBI:30616"/>
        <note>ligand shared between two neighboring subunits</note>
    </ligand>
</feature>
<feature type="binding site" evidence="2">
    <location>
        <position position="31"/>
    </location>
    <ligand>
        <name>L-methionine</name>
        <dbReference type="ChEBI" id="CHEBI:57844"/>
    </ligand>
</feature>
<feature type="non-terminal residue">
    <location>
        <position position="1"/>
    </location>
</feature>
<accession>P31156</accession>
<gene>
    <name type="primary">SMS-2</name>
</gene>
<dbReference type="EC" id="2.5.1.6" evidence="4"/>
<dbReference type="EMBL" id="M62757">
    <property type="protein sequence ID" value="AAA33858.1"/>
    <property type="molecule type" value="mRNA"/>
</dbReference>
<dbReference type="SMR" id="P31156"/>
<dbReference type="UniPathway" id="UPA00315">
    <property type="reaction ID" value="UER00080"/>
</dbReference>
<dbReference type="GO" id="GO:0005737">
    <property type="term" value="C:cytoplasm"/>
    <property type="evidence" value="ECO:0007669"/>
    <property type="project" value="UniProtKB-SubCell"/>
</dbReference>
<dbReference type="GO" id="GO:0005524">
    <property type="term" value="F:ATP binding"/>
    <property type="evidence" value="ECO:0007669"/>
    <property type="project" value="UniProtKB-KW"/>
</dbReference>
<dbReference type="GO" id="GO:0046872">
    <property type="term" value="F:metal ion binding"/>
    <property type="evidence" value="ECO:0007669"/>
    <property type="project" value="UniProtKB-KW"/>
</dbReference>
<dbReference type="GO" id="GO:0004478">
    <property type="term" value="F:methionine adenosyltransferase activity"/>
    <property type="evidence" value="ECO:0007669"/>
    <property type="project" value="UniProtKB-EC"/>
</dbReference>
<dbReference type="GO" id="GO:0006730">
    <property type="term" value="P:one-carbon metabolic process"/>
    <property type="evidence" value="ECO:0007669"/>
    <property type="project" value="UniProtKB-KW"/>
</dbReference>
<dbReference type="GO" id="GO:0006556">
    <property type="term" value="P:S-adenosylmethionine biosynthetic process"/>
    <property type="evidence" value="ECO:0007669"/>
    <property type="project" value="UniProtKB-UniPathway"/>
</dbReference>
<dbReference type="FunFam" id="3.30.300.10:FF:000004">
    <property type="entry name" value="S-adenosylmethionine synthase"/>
    <property type="match status" value="1"/>
</dbReference>
<dbReference type="Gene3D" id="3.30.300.10">
    <property type="match status" value="2"/>
</dbReference>
<dbReference type="InterPro" id="IPR022631">
    <property type="entry name" value="ADOMET_SYNTHASE_CS"/>
</dbReference>
<dbReference type="InterPro" id="IPR022630">
    <property type="entry name" value="S-AdoMet_synt_C"/>
</dbReference>
<dbReference type="InterPro" id="IPR002133">
    <property type="entry name" value="S-AdoMet_synthetase"/>
</dbReference>
<dbReference type="InterPro" id="IPR022636">
    <property type="entry name" value="S-AdoMet_synthetase_sfam"/>
</dbReference>
<dbReference type="PANTHER" id="PTHR11964">
    <property type="entry name" value="S-ADENOSYLMETHIONINE SYNTHETASE"/>
    <property type="match status" value="1"/>
</dbReference>
<dbReference type="Pfam" id="PF02773">
    <property type="entry name" value="S-AdoMet_synt_C"/>
    <property type="match status" value="1"/>
</dbReference>
<dbReference type="SUPFAM" id="SSF55973">
    <property type="entry name" value="S-adenosylmethionine synthetase"/>
    <property type="match status" value="1"/>
</dbReference>
<dbReference type="PROSITE" id="PS00377">
    <property type="entry name" value="ADOMET_SYNTHASE_2"/>
    <property type="match status" value="1"/>
</dbReference>
<organism>
    <name type="scientific">Petroselinum crispum</name>
    <name type="common">Parsley</name>
    <name type="synonym">Petroselinum hortense</name>
    <dbReference type="NCBI Taxonomy" id="4043"/>
    <lineage>
        <taxon>Eukaryota</taxon>
        <taxon>Viridiplantae</taxon>
        <taxon>Streptophyta</taxon>
        <taxon>Embryophyta</taxon>
        <taxon>Tracheophyta</taxon>
        <taxon>Spermatophyta</taxon>
        <taxon>Magnoliopsida</taxon>
        <taxon>eudicotyledons</taxon>
        <taxon>Gunneridae</taxon>
        <taxon>Pentapetalae</taxon>
        <taxon>asterids</taxon>
        <taxon>campanulids</taxon>
        <taxon>Apiales</taxon>
        <taxon>Apiaceae</taxon>
        <taxon>Apioideae</taxon>
        <taxon>apioid superclade</taxon>
        <taxon>Apieae</taxon>
        <taxon>Petroselinum</taxon>
    </lineage>
</organism>